<keyword id="KW-1185">Reference proteome</keyword>
<keyword id="KW-0949">S-adenosyl-L-methionine</keyword>
<keyword id="KW-0808">Transferase</keyword>
<organism>
    <name type="scientific">Shewanella amazonensis (strain ATCC BAA-1098 / SB2B)</name>
    <dbReference type="NCBI Taxonomy" id="326297"/>
    <lineage>
        <taxon>Bacteria</taxon>
        <taxon>Pseudomonadati</taxon>
        <taxon>Pseudomonadota</taxon>
        <taxon>Gammaproteobacteria</taxon>
        <taxon>Alteromonadales</taxon>
        <taxon>Shewanellaceae</taxon>
        <taxon>Shewanella</taxon>
    </lineage>
</organism>
<comment type="function">
    <text evidence="1">Catalyzes the conversion of S-adenosyl-L-methionine (SAM) to carboxy-S-adenosyl-L-methionine (Cx-SAM).</text>
</comment>
<comment type="catalytic activity">
    <reaction evidence="1">
        <text>prephenate + S-adenosyl-L-methionine = carboxy-S-adenosyl-L-methionine + 3-phenylpyruvate + H2O</text>
        <dbReference type="Rhea" id="RHEA:51692"/>
        <dbReference type="ChEBI" id="CHEBI:15377"/>
        <dbReference type="ChEBI" id="CHEBI:18005"/>
        <dbReference type="ChEBI" id="CHEBI:29934"/>
        <dbReference type="ChEBI" id="CHEBI:59789"/>
        <dbReference type="ChEBI" id="CHEBI:134278"/>
    </reaction>
</comment>
<comment type="subunit">
    <text evidence="1">Homodimer.</text>
</comment>
<comment type="similarity">
    <text evidence="1">Belongs to the class I-like SAM-binding methyltransferase superfamily. Cx-SAM synthase family.</text>
</comment>
<dbReference type="EC" id="2.1.3.-" evidence="1"/>
<dbReference type="EMBL" id="CP000507">
    <property type="protein sequence ID" value="ABM00051.1"/>
    <property type="molecule type" value="Genomic_DNA"/>
</dbReference>
<dbReference type="RefSeq" id="WP_011759958.1">
    <property type="nucleotide sequence ID" value="NC_008700.1"/>
</dbReference>
<dbReference type="SMR" id="A1S6P4"/>
<dbReference type="STRING" id="326297.Sama_1845"/>
<dbReference type="KEGG" id="saz:Sama_1845"/>
<dbReference type="eggNOG" id="COG2226">
    <property type="taxonomic scope" value="Bacteria"/>
</dbReference>
<dbReference type="HOGENOM" id="CLU_078475_0_0_6"/>
<dbReference type="OrthoDB" id="9779941at2"/>
<dbReference type="Proteomes" id="UP000009175">
    <property type="component" value="Chromosome"/>
</dbReference>
<dbReference type="GO" id="GO:0016743">
    <property type="term" value="F:carboxyl- or carbamoyltransferase activity"/>
    <property type="evidence" value="ECO:0007669"/>
    <property type="project" value="UniProtKB-UniRule"/>
</dbReference>
<dbReference type="GO" id="GO:1904047">
    <property type="term" value="F:S-adenosyl-L-methionine binding"/>
    <property type="evidence" value="ECO:0007669"/>
    <property type="project" value="UniProtKB-UniRule"/>
</dbReference>
<dbReference type="GO" id="GO:0002098">
    <property type="term" value="P:tRNA wobble uridine modification"/>
    <property type="evidence" value="ECO:0007669"/>
    <property type="project" value="InterPro"/>
</dbReference>
<dbReference type="CDD" id="cd02440">
    <property type="entry name" value="AdoMet_MTases"/>
    <property type="match status" value="1"/>
</dbReference>
<dbReference type="Gene3D" id="3.40.50.150">
    <property type="entry name" value="Vaccinia Virus protein VP39"/>
    <property type="match status" value="1"/>
</dbReference>
<dbReference type="HAMAP" id="MF_01589">
    <property type="entry name" value="Cx_SAM_synthase"/>
    <property type="match status" value="1"/>
</dbReference>
<dbReference type="InterPro" id="IPR005271">
    <property type="entry name" value="CmoA"/>
</dbReference>
<dbReference type="InterPro" id="IPR041698">
    <property type="entry name" value="Methyltransf_25"/>
</dbReference>
<dbReference type="InterPro" id="IPR029063">
    <property type="entry name" value="SAM-dependent_MTases_sf"/>
</dbReference>
<dbReference type="NCBIfam" id="TIGR00740">
    <property type="entry name" value="carboxy-S-adenosyl-L-methionine synthase CmoA"/>
    <property type="match status" value="1"/>
</dbReference>
<dbReference type="NCBIfam" id="NF011995">
    <property type="entry name" value="PRK15451.1"/>
    <property type="match status" value="1"/>
</dbReference>
<dbReference type="PANTHER" id="PTHR43861:SF2">
    <property type="entry name" value="CARBOXY-S-ADENOSYL-L-METHIONINE SYNTHASE"/>
    <property type="match status" value="1"/>
</dbReference>
<dbReference type="PANTHER" id="PTHR43861">
    <property type="entry name" value="TRANS-ACONITATE 2-METHYLTRANSFERASE-RELATED"/>
    <property type="match status" value="1"/>
</dbReference>
<dbReference type="Pfam" id="PF13649">
    <property type="entry name" value="Methyltransf_25"/>
    <property type="match status" value="1"/>
</dbReference>
<dbReference type="PIRSF" id="PIRSF006325">
    <property type="entry name" value="MeTrfase_bac"/>
    <property type="match status" value="1"/>
</dbReference>
<dbReference type="SUPFAM" id="SSF53335">
    <property type="entry name" value="S-adenosyl-L-methionine-dependent methyltransferases"/>
    <property type="match status" value="1"/>
</dbReference>
<accession>A1S6P4</accession>
<protein>
    <recommendedName>
        <fullName evidence="1">Carboxy-S-adenosyl-L-methionine synthase</fullName>
        <shortName evidence="1">Cx-SAM synthase</shortName>
        <ecNumber evidence="1">2.1.3.-</ecNumber>
    </recommendedName>
</protein>
<name>CMOA_SHEAM</name>
<reference key="1">
    <citation type="submission" date="2006-12" db="EMBL/GenBank/DDBJ databases">
        <title>Complete sequence of Shewanella amazonensis SB2B.</title>
        <authorList>
            <consortium name="US DOE Joint Genome Institute"/>
            <person name="Copeland A."/>
            <person name="Lucas S."/>
            <person name="Lapidus A."/>
            <person name="Barry K."/>
            <person name="Detter J.C."/>
            <person name="Glavina del Rio T."/>
            <person name="Hammon N."/>
            <person name="Israni S."/>
            <person name="Dalin E."/>
            <person name="Tice H."/>
            <person name="Pitluck S."/>
            <person name="Munk A.C."/>
            <person name="Brettin T."/>
            <person name="Bruce D."/>
            <person name="Han C."/>
            <person name="Tapia R."/>
            <person name="Gilna P."/>
            <person name="Schmutz J."/>
            <person name="Larimer F."/>
            <person name="Land M."/>
            <person name="Hauser L."/>
            <person name="Kyrpides N."/>
            <person name="Mikhailova N."/>
            <person name="Fredrickson J."/>
            <person name="Richardson P."/>
        </authorList>
    </citation>
    <scope>NUCLEOTIDE SEQUENCE [LARGE SCALE GENOMIC DNA]</scope>
    <source>
        <strain>ATCC BAA-1098 / SB2B</strain>
    </source>
</reference>
<evidence type="ECO:0000255" key="1">
    <source>
        <dbReference type="HAMAP-Rule" id="MF_01589"/>
    </source>
</evidence>
<proteinExistence type="inferred from homology"/>
<sequence>MTNQQDTLFAEPGEHQGNFQFDSRVAGVFGDMIRRSVPGYTQIINTIGEIADRCVTPGSNVYDLGCSLGAATLAIRRKIEGRNARIFAIDNSEPMLVRAEENLSAYVSDTKVFFQLADIRDQTFENASLVVLNFTLQFLPPDDRDTLLARIYQGLNPGGILLLSEKLKFDGVDVQALLDSLHLDFKRANGYSELEISQKRSAIENVLIPDTLEQHKTRLNQAGFTQADLWFQCFNFASMVAIK</sequence>
<gene>
    <name evidence="1" type="primary">cmoA</name>
    <name type="ordered locus">Sama_1845</name>
</gene>
<feature type="chain" id="PRO_0000314375" description="Carboxy-S-adenosyl-L-methionine synthase">
    <location>
        <begin position="1"/>
        <end position="243"/>
    </location>
</feature>
<feature type="binding site" evidence="1">
    <location>
        <position position="40"/>
    </location>
    <ligand>
        <name>S-adenosyl-L-methionine</name>
        <dbReference type="ChEBI" id="CHEBI:59789"/>
    </ligand>
</feature>
<feature type="binding site" evidence="1">
    <location>
        <begin position="65"/>
        <end position="67"/>
    </location>
    <ligand>
        <name>S-adenosyl-L-methionine</name>
        <dbReference type="ChEBI" id="CHEBI:59789"/>
    </ligand>
</feature>
<feature type="binding site" evidence="1">
    <location>
        <begin position="90"/>
        <end position="91"/>
    </location>
    <ligand>
        <name>S-adenosyl-L-methionine</name>
        <dbReference type="ChEBI" id="CHEBI:59789"/>
    </ligand>
</feature>
<feature type="binding site" evidence="1">
    <location>
        <begin position="118"/>
        <end position="119"/>
    </location>
    <ligand>
        <name>S-adenosyl-L-methionine</name>
        <dbReference type="ChEBI" id="CHEBI:59789"/>
    </ligand>
</feature>
<feature type="binding site" evidence="1">
    <location>
        <position position="133"/>
    </location>
    <ligand>
        <name>S-adenosyl-L-methionine</name>
        <dbReference type="ChEBI" id="CHEBI:59789"/>
    </ligand>
</feature>
<feature type="binding site" evidence="1">
    <location>
        <position position="200"/>
    </location>
    <ligand>
        <name>S-adenosyl-L-methionine</name>
        <dbReference type="ChEBI" id="CHEBI:59789"/>
    </ligand>
</feature>